<accession>P53653</accession>
<protein>
    <recommendedName>
        <fullName>Superoxide dismutase [Mn]</fullName>
        <ecNumber>1.15.1.1</ecNumber>
    </recommendedName>
</protein>
<sequence>MPYPFKLPELGYPYEALEPHIDARTMEIHHQKHHGAYVTNLNAALEKYPYLQGAEVETLLRHLTALPADIQAAVRNNGGGHLNHSLFWRLLTPGGAKEPVGELKKAIDEQFGGFAALKEKLTQAAMGRFGSGWAWLVKDPFGKLHVISTANQDNPVMGGFAPIVGIDVWEHAYYLKYQNRRADYLQAIWNVLNWDVAEEIYKGA</sequence>
<comment type="function">
    <text>Destroys superoxide anion radicals which are normally produced within the cells and which are toxic to biological systems.</text>
</comment>
<comment type="catalytic activity">
    <reaction>
        <text>2 superoxide + 2 H(+) = H2O2 + O2</text>
        <dbReference type="Rhea" id="RHEA:20696"/>
        <dbReference type="ChEBI" id="CHEBI:15378"/>
        <dbReference type="ChEBI" id="CHEBI:15379"/>
        <dbReference type="ChEBI" id="CHEBI:16240"/>
        <dbReference type="ChEBI" id="CHEBI:18421"/>
        <dbReference type="EC" id="1.15.1.1"/>
    </reaction>
</comment>
<comment type="cofactor">
    <cofactor evidence="1">
        <name>Mn(2+)</name>
        <dbReference type="ChEBI" id="CHEBI:29035"/>
    </cofactor>
    <text evidence="1">Binds 1 Mn(2+) ion per subunit.</text>
</comment>
<comment type="subunit">
    <text evidence="1">Homotetramer.</text>
</comment>
<comment type="similarity">
    <text evidence="2">Belongs to the iron/manganese superoxide dismutase family.</text>
</comment>
<gene>
    <name type="primary">sodA</name>
</gene>
<organism>
    <name type="scientific">Thermus aquaticus</name>
    <dbReference type="NCBI Taxonomy" id="271"/>
    <lineage>
        <taxon>Bacteria</taxon>
        <taxon>Thermotogati</taxon>
        <taxon>Deinococcota</taxon>
        <taxon>Deinococci</taxon>
        <taxon>Thermales</taxon>
        <taxon>Thermaceae</taxon>
        <taxon>Thermus</taxon>
    </lineage>
</organism>
<reference key="1">
    <citation type="submission" date="1992-10" db="EMBL/GenBank/DDBJ databases">
        <authorList>
            <person name="Motoshima H."/>
            <person name="Minagawa E."/>
            <person name="Tsukasaki F."/>
        </authorList>
    </citation>
    <scope>NUCLEOTIDE SEQUENCE [GENOMIC DNA]</scope>
    <source>
        <strain>ATCC 25104 / DSM 625 / JCM 10724 / NBRC 103206 / NCIMB 11243 / YT-1</strain>
    </source>
</reference>
<proteinExistence type="inferred from homology"/>
<evidence type="ECO:0000250" key="1"/>
<evidence type="ECO:0000305" key="2"/>
<name>SODM_THEAQ</name>
<dbReference type="EC" id="1.15.1.1"/>
<dbReference type="EMBL" id="D13387">
    <property type="protein sequence ID" value="BAA02655.1"/>
    <property type="molecule type" value="Genomic_DNA"/>
</dbReference>
<dbReference type="EMBL" id="D84646">
    <property type="protein sequence ID" value="BAA12703.1"/>
    <property type="molecule type" value="Genomic_DNA"/>
</dbReference>
<dbReference type="PIR" id="T45270">
    <property type="entry name" value="T45270"/>
</dbReference>
<dbReference type="SMR" id="P53653"/>
<dbReference type="GO" id="GO:0005737">
    <property type="term" value="C:cytoplasm"/>
    <property type="evidence" value="ECO:0007669"/>
    <property type="project" value="TreeGrafter"/>
</dbReference>
<dbReference type="GO" id="GO:0046872">
    <property type="term" value="F:metal ion binding"/>
    <property type="evidence" value="ECO:0007669"/>
    <property type="project" value="UniProtKB-KW"/>
</dbReference>
<dbReference type="GO" id="GO:0004784">
    <property type="term" value="F:superoxide dismutase activity"/>
    <property type="evidence" value="ECO:0007669"/>
    <property type="project" value="UniProtKB-EC"/>
</dbReference>
<dbReference type="FunFam" id="1.10.287.990:FF:000001">
    <property type="entry name" value="Superoxide dismutase"/>
    <property type="match status" value="1"/>
</dbReference>
<dbReference type="FunFam" id="3.55.40.20:FF:000001">
    <property type="entry name" value="Superoxide dismutase"/>
    <property type="match status" value="1"/>
</dbReference>
<dbReference type="Gene3D" id="1.10.287.990">
    <property type="entry name" value="Fe,Mn superoxide dismutase (SOD) domain"/>
    <property type="match status" value="1"/>
</dbReference>
<dbReference type="Gene3D" id="3.55.40.20">
    <property type="entry name" value="Iron/manganese superoxide dismutase, C-terminal domain"/>
    <property type="match status" value="1"/>
</dbReference>
<dbReference type="InterPro" id="IPR001189">
    <property type="entry name" value="Mn/Fe_SOD"/>
</dbReference>
<dbReference type="InterPro" id="IPR019833">
    <property type="entry name" value="Mn/Fe_SOD_BS"/>
</dbReference>
<dbReference type="InterPro" id="IPR019832">
    <property type="entry name" value="Mn/Fe_SOD_C"/>
</dbReference>
<dbReference type="InterPro" id="IPR019831">
    <property type="entry name" value="Mn/Fe_SOD_N"/>
</dbReference>
<dbReference type="InterPro" id="IPR036324">
    <property type="entry name" value="Mn/Fe_SOD_N_sf"/>
</dbReference>
<dbReference type="InterPro" id="IPR036314">
    <property type="entry name" value="SOD_C_sf"/>
</dbReference>
<dbReference type="PANTHER" id="PTHR43595">
    <property type="entry name" value="37S RIBOSOMAL PROTEIN S26, MITOCHONDRIAL"/>
    <property type="match status" value="1"/>
</dbReference>
<dbReference type="PANTHER" id="PTHR43595:SF2">
    <property type="entry name" value="SMALL RIBOSOMAL SUBUNIT PROTEIN MS42"/>
    <property type="match status" value="1"/>
</dbReference>
<dbReference type="Pfam" id="PF02777">
    <property type="entry name" value="Sod_Fe_C"/>
    <property type="match status" value="1"/>
</dbReference>
<dbReference type="Pfam" id="PF00081">
    <property type="entry name" value="Sod_Fe_N"/>
    <property type="match status" value="1"/>
</dbReference>
<dbReference type="PIRSF" id="PIRSF000349">
    <property type="entry name" value="SODismutase"/>
    <property type="match status" value="1"/>
</dbReference>
<dbReference type="PRINTS" id="PR01703">
    <property type="entry name" value="MNSODISMTASE"/>
</dbReference>
<dbReference type="SUPFAM" id="SSF54719">
    <property type="entry name" value="Fe,Mn superoxide dismutase (SOD), C-terminal domain"/>
    <property type="match status" value="1"/>
</dbReference>
<dbReference type="SUPFAM" id="SSF46609">
    <property type="entry name" value="Fe,Mn superoxide dismutase (SOD), N-terminal domain"/>
    <property type="match status" value="1"/>
</dbReference>
<dbReference type="PROSITE" id="PS00088">
    <property type="entry name" value="SOD_MN"/>
    <property type="match status" value="1"/>
</dbReference>
<keyword id="KW-0464">Manganese</keyword>
<keyword id="KW-0479">Metal-binding</keyword>
<keyword id="KW-0560">Oxidoreductase</keyword>
<feature type="initiator methionine" description="Removed" evidence="1">
    <location>
        <position position="1"/>
    </location>
</feature>
<feature type="chain" id="PRO_0000160106" description="Superoxide dismutase [Mn]">
    <location>
        <begin position="2"/>
        <end position="204"/>
    </location>
</feature>
<feature type="binding site" evidence="1">
    <location>
        <position position="29"/>
    </location>
    <ligand>
        <name>Mn(2+)</name>
        <dbReference type="ChEBI" id="CHEBI:29035"/>
    </ligand>
</feature>
<feature type="binding site" evidence="1">
    <location>
        <position position="84"/>
    </location>
    <ligand>
        <name>Mn(2+)</name>
        <dbReference type="ChEBI" id="CHEBI:29035"/>
    </ligand>
</feature>
<feature type="binding site" evidence="1">
    <location>
        <position position="167"/>
    </location>
    <ligand>
        <name>Mn(2+)</name>
        <dbReference type="ChEBI" id="CHEBI:29035"/>
    </ligand>
</feature>
<feature type="binding site" evidence="1">
    <location>
        <position position="171"/>
    </location>
    <ligand>
        <name>Mn(2+)</name>
        <dbReference type="ChEBI" id="CHEBI:29035"/>
    </ligand>
</feature>